<gene>
    <name evidence="1" type="primary">ureA</name>
    <name type="ordered locus">YpsIP31758_1077</name>
</gene>
<reference key="1">
    <citation type="journal article" date="2007" name="PLoS Genet.">
        <title>The complete genome sequence of Yersinia pseudotuberculosis IP31758, the causative agent of Far East scarlet-like fever.</title>
        <authorList>
            <person name="Eppinger M."/>
            <person name="Rosovitz M.J."/>
            <person name="Fricke W.F."/>
            <person name="Rasko D.A."/>
            <person name="Kokorina G."/>
            <person name="Fayolle C."/>
            <person name="Lindler L.E."/>
            <person name="Carniel E."/>
            <person name="Ravel J."/>
        </authorList>
    </citation>
    <scope>NUCLEOTIDE SEQUENCE [LARGE SCALE GENOMIC DNA]</scope>
    <source>
        <strain>IP 31758</strain>
    </source>
</reference>
<sequence length="100" mass="11049">MQLTPREVEKLMIYTLSDVAFKRKARGLKLNYPEAVSIITVTAMEGARDGKSVEDVMKEASKVLTKDDVMDGVADLIPNVQVEAIFTDGSRLVTVHDPIK</sequence>
<comment type="catalytic activity">
    <reaction evidence="1">
        <text>urea + 2 H2O + H(+) = hydrogencarbonate + 2 NH4(+)</text>
        <dbReference type="Rhea" id="RHEA:20557"/>
        <dbReference type="ChEBI" id="CHEBI:15377"/>
        <dbReference type="ChEBI" id="CHEBI:15378"/>
        <dbReference type="ChEBI" id="CHEBI:16199"/>
        <dbReference type="ChEBI" id="CHEBI:17544"/>
        <dbReference type="ChEBI" id="CHEBI:28938"/>
        <dbReference type="EC" id="3.5.1.5"/>
    </reaction>
</comment>
<comment type="pathway">
    <text evidence="1">Nitrogen metabolism; urea degradation; CO(2) and NH(3) from urea (urease route): step 1/1.</text>
</comment>
<comment type="subunit">
    <text evidence="1">Heterotrimer of UreA (gamma), UreB (beta) and UreC (alpha) subunits. Three heterotrimers associate to form the active enzyme.</text>
</comment>
<comment type="subcellular location">
    <subcellularLocation>
        <location evidence="1">Cytoplasm</location>
    </subcellularLocation>
</comment>
<comment type="similarity">
    <text evidence="1">Belongs to the urease gamma subunit family.</text>
</comment>
<keyword id="KW-0963">Cytoplasm</keyword>
<keyword id="KW-0378">Hydrolase</keyword>
<accession>A7FFN0</accession>
<protein>
    <recommendedName>
        <fullName evidence="1">Urease subunit gamma</fullName>
        <ecNumber evidence="1">3.5.1.5</ecNumber>
    </recommendedName>
    <alternativeName>
        <fullName evidence="1">Urea amidohydrolase subunit gamma</fullName>
    </alternativeName>
</protein>
<name>URE3_YERP3</name>
<organism>
    <name type="scientific">Yersinia pseudotuberculosis serotype O:1b (strain IP 31758)</name>
    <dbReference type="NCBI Taxonomy" id="349747"/>
    <lineage>
        <taxon>Bacteria</taxon>
        <taxon>Pseudomonadati</taxon>
        <taxon>Pseudomonadota</taxon>
        <taxon>Gammaproteobacteria</taxon>
        <taxon>Enterobacterales</taxon>
        <taxon>Yersiniaceae</taxon>
        <taxon>Yersinia</taxon>
    </lineage>
</organism>
<feature type="chain" id="PRO_1000062146" description="Urease subunit gamma">
    <location>
        <begin position="1"/>
        <end position="100"/>
    </location>
</feature>
<evidence type="ECO:0000255" key="1">
    <source>
        <dbReference type="HAMAP-Rule" id="MF_00739"/>
    </source>
</evidence>
<proteinExistence type="inferred from homology"/>
<dbReference type="EC" id="3.5.1.5" evidence="1"/>
<dbReference type="EMBL" id="CP000720">
    <property type="protein sequence ID" value="ABS47267.1"/>
    <property type="molecule type" value="Genomic_DNA"/>
</dbReference>
<dbReference type="RefSeq" id="WP_002215288.1">
    <property type="nucleotide sequence ID" value="NC_009708.1"/>
</dbReference>
<dbReference type="SMR" id="A7FFN0"/>
<dbReference type="KEGG" id="ypi:YpsIP31758_1077"/>
<dbReference type="HOGENOM" id="CLU_145825_1_0_6"/>
<dbReference type="UniPathway" id="UPA00258">
    <property type="reaction ID" value="UER00370"/>
</dbReference>
<dbReference type="Proteomes" id="UP000002412">
    <property type="component" value="Chromosome"/>
</dbReference>
<dbReference type="GO" id="GO:0005737">
    <property type="term" value="C:cytoplasm"/>
    <property type="evidence" value="ECO:0007669"/>
    <property type="project" value="UniProtKB-SubCell"/>
</dbReference>
<dbReference type="GO" id="GO:0016151">
    <property type="term" value="F:nickel cation binding"/>
    <property type="evidence" value="ECO:0007669"/>
    <property type="project" value="InterPro"/>
</dbReference>
<dbReference type="GO" id="GO:0009039">
    <property type="term" value="F:urease activity"/>
    <property type="evidence" value="ECO:0007669"/>
    <property type="project" value="UniProtKB-UniRule"/>
</dbReference>
<dbReference type="GO" id="GO:0043419">
    <property type="term" value="P:urea catabolic process"/>
    <property type="evidence" value="ECO:0007669"/>
    <property type="project" value="UniProtKB-UniRule"/>
</dbReference>
<dbReference type="CDD" id="cd00390">
    <property type="entry name" value="Urease_gamma"/>
    <property type="match status" value="1"/>
</dbReference>
<dbReference type="Gene3D" id="3.30.280.10">
    <property type="entry name" value="Urease, gamma-like subunit"/>
    <property type="match status" value="1"/>
</dbReference>
<dbReference type="HAMAP" id="MF_00739">
    <property type="entry name" value="Urease_gamma"/>
    <property type="match status" value="1"/>
</dbReference>
<dbReference type="InterPro" id="IPR012010">
    <property type="entry name" value="Urease_gamma"/>
</dbReference>
<dbReference type="InterPro" id="IPR002026">
    <property type="entry name" value="Urease_gamma/gamma-beta_su"/>
</dbReference>
<dbReference type="InterPro" id="IPR036463">
    <property type="entry name" value="Urease_gamma_sf"/>
</dbReference>
<dbReference type="InterPro" id="IPR050069">
    <property type="entry name" value="Urease_subunit"/>
</dbReference>
<dbReference type="NCBIfam" id="NF009712">
    <property type="entry name" value="PRK13241.1"/>
    <property type="match status" value="1"/>
</dbReference>
<dbReference type="NCBIfam" id="TIGR00193">
    <property type="entry name" value="urease_gam"/>
    <property type="match status" value="1"/>
</dbReference>
<dbReference type="PANTHER" id="PTHR33569">
    <property type="entry name" value="UREASE"/>
    <property type="match status" value="1"/>
</dbReference>
<dbReference type="PANTHER" id="PTHR33569:SF1">
    <property type="entry name" value="UREASE"/>
    <property type="match status" value="1"/>
</dbReference>
<dbReference type="Pfam" id="PF00547">
    <property type="entry name" value="Urease_gamma"/>
    <property type="match status" value="1"/>
</dbReference>
<dbReference type="PIRSF" id="PIRSF001223">
    <property type="entry name" value="Urease_gamma"/>
    <property type="match status" value="1"/>
</dbReference>
<dbReference type="SUPFAM" id="SSF54111">
    <property type="entry name" value="Urease, gamma-subunit"/>
    <property type="match status" value="1"/>
</dbReference>